<accession>Q9PW61</accession>
<evidence type="ECO:0000250" key="1"/>
<evidence type="ECO:0000250" key="2">
    <source>
        <dbReference type="UniProtKB" id="P00338"/>
    </source>
</evidence>
<evidence type="ECO:0000305" key="3"/>
<dbReference type="EC" id="1.1.1.27" evidence="2"/>
<dbReference type="EMBL" id="AF170027">
    <property type="protein sequence ID" value="AAD48482.1"/>
    <property type="molecule type" value="mRNA"/>
</dbReference>
<dbReference type="SMR" id="Q9PW61"/>
<dbReference type="UniPathway" id="UPA00554">
    <property type="reaction ID" value="UER00611"/>
</dbReference>
<dbReference type="GO" id="GO:0005737">
    <property type="term" value="C:cytoplasm"/>
    <property type="evidence" value="ECO:0007669"/>
    <property type="project" value="UniProtKB-SubCell"/>
</dbReference>
<dbReference type="GO" id="GO:0004459">
    <property type="term" value="F:L-lactate dehydrogenase activity"/>
    <property type="evidence" value="ECO:0007669"/>
    <property type="project" value="UniProtKB-EC"/>
</dbReference>
<dbReference type="GO" id="GO:0006089">
    <property type="term" value="P:lactate metabolic process"/>
    <property type="evidence" value="ECO:0007669"/>
    <property type="project" value="TreeGrafter"/>
</dbReference>
<dbReference type="CDD" id="cd05293">
    <property type="entry name" value="LDH_1"/>
    <property type="match status" value="1"/>
</dbReference>
<dbReference type="FunFam" id="3.40.50.720:FF:000029">
    <property type="entry name" value="L-lactate dehydrogenase A chain"/>
    <property type="match status" value="1"/>
</dbReference>
<dbReference type="FunFam" id="3.90.110.10:FF:000003">
    <property type="entry name" value="L-lactate dehydrogenase A chain"/>
    <property type="match status" value="1"/>
</dbReference>
<dbReference type="Gene3D" id="3.90.110.10">
    <property type="entry name" value="Lactate dehydrogenase/glycoside hydrolase, family 4, C-terminal"/>
    <property type="match status" value="1"/>
</dbReference>
<dbReference type="Gene3D" id="3.40.50.720">
    <property type="entry name" value="NAD(P)-binding Rossmann-like Domain"/>
    <property type="match status" value="1"/>
</dbReference>
<dbReference type="HAMAP" id="MF_00488">
    <property type="entry name" value="Lactate_dehydrog"/>
    <property type="match status" value="1"/>
</dbReference>
<dbReference type="InterPro" id="IPR001557">
    <property type="entry name" value="L-lactate/malate_DH"/>
</dbReference>
<dbReference type="InterPro" id="IPR011304">
    <property type="entry name" value="L-lactate_DH"/>
</dbReference>
<dbReference type="InterPro" id="IPR018177">
    <property type="entry name" value="L-lactate_DH_AS"/>
</dbReference>
<dbReference type="InterPro" id="IPR022383">
    <property type="entry name" value="Lactate/malate_DH_C"/>
</dbReference>
<dbReference type="InterPro" id="IPR001236">
    <property type="entry name" value="Lactate/malate_DH_N"/>
</dbReference>
<dbReference type="InterPro" id="IPR015955">
    <property type="entry name" value="Lactate_DH/Glyco_Ohase_4_C"/>
</dbReference>
<dbReference type="InterPro" id="IPR036291">
    <property type="entry name" value="NAD(P)-bd_dom_sf"/>
</dbReference>
<dbReference type="NCBIfam" id="TIGR01771">
    <property type="entry name" value="L-LDH-NAD"/>
    <property type="match status" value="1"/>
</dbReference>
<dbReference type="NCBIfam" id="NF000824">
    <property type="entry name" value="PRK00066.1"/>
    <property type="match status" value="1"/>
</dbReference>
<dbReference type="PANTHER" id="PTHR43128">
    <property type="entry name" value="L-2-HYDROXYCARBOXYLATE DEHYDROGENASE (NAD(P)(+))"/>
    <property type="match status" value="1"/>
</dbReference>
<dbReference type="PANTHER" id="PTHR43128:SF10">
    <property type="entry name" value="L-LACTATE DEHYDROGENASE A CHAIN"/>
    <property type="match status" value="1"/>
</dbReference>
<dbReference type="Pfam" id="PF02866">
    <property type="entry name" value="Ldh_1_C"/>
    <property type="match status" value="1"/>
</dbReference>
<dbReference type="Pfam" id="PF00056">
    <property type="entry name" value="Ldh_1_N"/>
    <property type="match status" value="1"/>
</dbReference>
<dbReference type="PIRSF" id="PIRSF000102">
    <property type="entry name" value="Lac_mal_DH"/>
    <property type="match status" value="1"/>
</dbReference>
<dbReference type="PRINTS" id="PR00086">
    <property type="entry name" value="LLDHDRGNASE"/>
</dbReference>
<dbReference type="SUPFAM" id="SSF56327">
    <property type="entry name" value="LDH C-terminal domain-like"/>
    <property type="match status" value="1"/>
</dbReference>
<dbReference type="SUPFAM" id="SSF51735">
    <property type="entry name" value="NAD(P)-binding Rossmann-fold domains"/>
    <property type="match status" value="1"/>
</dbReference>
<dbReference type="PROSITE" id="PS00064">
    <property type="entry name" value="L_LDH"/>
    <property type="match status" value="1"/>
</dbReference>
<keyword id="KW-0963">Cytoplasm</keyword>
<keyword id="KW-0520">NAD</keyword>
<keyword id="KW-0560">Oxidoreductase</keyword>
<organism>
    <name type="scientific">Dissostichus eleginoides</name>
    <name type="common">Patagonian toothfish</name>
    <name type="synonym">Dissostichus amissus</name>
    <dbReference type="NCBI Taxonomy" id="100907"/>
    <lineage>
        <taxon>Eukaryota</taxon>
        <taxon>Metazoa</taxon>
        <taxon>Chordata</taxon>
        <taxon>Craniata</taxon>
        <taxon>Vertebrata</taxon>
        <taxon>Euteleostomi</taxon>
        <taxon>Actinopterygii</taxon>
        <taxon>Neopterygii</taxon>
        <taxon>Teleostei</taxon>
        <taxon>Neoteleostei</taxon>
        <taxon>Acanthomorphata</taxon>
        <taxon>Eupercaria</taxon>
        <taxon>Perciformes</taxon>
        <taxon>Notothenioidei</taxon>
        <taxon>Nototheniidae</taxon>
        <taxon>Dissostichus</taxon>
    </lineage>
</organism>
<sequence length="331" mass="36144">MSTKEKLISHVMKEEPVGSRNKVTVVGVGMVGMASAISILLKDLCDELAMVDVMEDKLKGEVMDLQHGSLFLKTKIVGDKDYSVTANSKVVVVTAGARQQEGESRLNLVQRNVNIFKFIIPNIVKYSPNCILMVVSNPVDILTYVAWKLSGFPRNRVIGSGTNLDSARFRHLIGEKLHLHPSSCHAWIVGEHGDSSVPVWSGVNVAGVSLQGLNPQMGTEGDGENWKAIHKEVVDGAYEVIKLKGYTSWAIGMSVADLVESIIKNMHKVHPVSTLVQGMHGVKDEVFLSVPSVLGNSGLTDVIHMTLKAEEEKQLQKSAETLWGVQKELTL</sequence>
<gene>
    <name type="primary">ldha</name>
</gene>
<comment type="function">
    <text evidence="2">Interconverts simultaneously and stereospecifically pyruvate and lactate with concomitant interconversion of NADH and NAD(+).</text>
</comment>
<comment type="catalytic activity">
    <reaction evidence="2">
        <text>(S)-lactate + NAD(+) = pyruvate + NADH + H(+)</text>
        <dbReference type="Rhea" id="RHEA:23444"/>
        <dbReference type="ChEBI" id="CHEBI:15361"/>
        <dbReference type="ChEBI" id="CHEBI:15378"/>
        <dbReference type="ChEBI" id="CHEBI:16651"/>
        <dbReference type="ChEBI" id="CHEBI:57540"/>
        <dbReference type="ChEBI" id="CHEBI:57945"/>
        <dbReference type="EC" id="1.1.1.27"/>
    </reaction>
    <physiologicalReaction direction="left-to-right" evidence="2">
        <dbReference type="Rhea" id="RHEA:23445"/>
    </physiologicalReaction>
    <physiologicalReaction direction="right-to-left" evidence="2">
        <dbReference type="Rhea" id="RHEA:23446"/>
    </physiologicalReaction>
</comment>
<comment type="pathway">
    <text evidence="2">Fermentation; pyruvate fermentation to lactate; (S)-lactate from pyruvate: step 1/1.</text>
</comment>
<comment type="subunit">
    <text evidence="1">Homotetramer.</text>
</comment>
<comment type="subcellular location">
    <subcellularLocation>
        <location evidence="1">Cytoplasm</location>
    </subcellularLocation>
</comment>
<comment type="similarity">
    <text evidence="3">Belongs to the LDH/MDH superfamily. LDH family.</text>
</comment>
<reference key="1">
    <citation type="submission" date="1999-07" db="EMBL/GenBank/DDBJ databases">
        <title>Cold adaptation in lactate dehydrogenases from Antarctic fish.</title>
        <authorList>
            <person name="Marshall C.J."/>
            <person name="McInnes S.J."/>
            <person name="Love C.A."/>
        </authorList>
    </citation>
    <scope>NUCLEOTIDE SEQUENCE [MRNA]</scope>
    <source>
        <tissue>Muscle</tissue>
    </source>
</reference>
<proteinExistence type="evidence at transcript level"/>
<feature type="initiator methionine" description="Removed" evidence="1">
    <location>
        <position position="1"/>
    </location>
</feature>
<feature type="chain" id="PRO_0000168435" description="L-lactate dehydrogenase A chain">
    <location>
        <begin position="2"/>
        <end position="331"/>
    </location>
</feature>
<feature type="active site" description="Proton acceptor" evidence="1">
    <location>
        <position position="192"/>
    </location>
</feature>
<feature type="binding site" evidence="1">
    <location>
        <begin position="29"/>
        <end position="57"/>
    </location>
    <ligand>
        <name>NAD(+)</name>
        <dbReference type="ChEBI" id="CHEBI:57540"/>
    </ligand>
</feature>
<feature type="binding site" evidence="1">
    <location>
        <position position="98"/>
    </location>
    <ligand>
        <name>NAD(+)</name>
        <dbReference type="ChEBI" id="CHEBI:57540"/>
    </ligand>
</feature>
<feature type="binding site" evidence="1">
    <location>
        <position position="105"/>
    </location>
    <ligand>
        <name>substrate</name>
    </ligand>
</feature>
<feature type="binding site" evidence="1">
    <location>
        <position position="137"/>
    </location>
    <ligand>
        <name>NAD(+)</name>
        <dbReference type="ChEBI" id="CHEBI:57540"/>
    </ligand>
</feature>
<feature type="binding site" evidence="1">
    <location>
        <position position="137"/>
    </location>
    <ligand>
        <name>substrate</name>
    </ligand>
</feature>
<feature type="binding site" evidence="1">
    <location>
        <position position="168"/>
    </location>
    <ligand>
        <name>substrate</name>
    </ligand>
</feature>
<feature type="binding site" evidence="1">
    <location>
        <position position="247"/>
    </location>
    <ligand>
        <name>substrate</name>
    </ligand>
</feature>
<protein>
    <recommendedName>
        <fullName>L-lactate dehydrogenase A chain</fullName>
        <shortName>LDH-A</shortName>
        <ecNumber evidence="2">1.1.1.27</ecNumber>
    </recommendedName>
</protein>
<name>LDHA_DISEL</name>